<reference key="1">
    <citation type="journal article" date="1999" name="Nature">
        <title>Sequence and analysis of chromosome 4 of the plant Arabidopsis thaliana.</title>
        <authorList>
            <person name="Mayer K.F.X."/>
            <person name="Schueller C."/>
            <person name="Wambutt R."/>
            <person name="Murphy G."/>
            <person name="Volckaert G."/>
            <person name="Pohl T."/>
            <person name="Duesterhoeft A."/>
            <person name="Stiekema W."/>
            <person name="Entian K.-D."/>
            <person name="Terryn N."/>
            <person name="Harris B."/>
            <person name="Ansorge W."/>
            <person name="Brandt P."/>
            <person name="Grivell L.A."/>
            <person name="Rieger M."/>
            <person name="Weichselgartner M."/>
            <person name="de Simone V."/>
            <person name="Obermaier B."/>
            <person name="Mache R."/>
            <person name="Mueller M."/>
            <person name="Kreis M."/>
            <person name="Delseny M."/>
            <person name="Puigdomenech P."/>
            <person name="Watson M."/>
            <person name="Schmidtheini T."/>
            <person name="Reichert B."/>
            <person name="Portetelle D."/>
            <person name="Perez-Alonso M."/>
            <person name="Boutry M."/>
            <person name="Bancroft I."/>
            <person name="Vos P."/>
            <person name="Hoheisel J."/>
            <person name="Zimmermann W."/>
            <person name="Wedler H."/>
            <person name="Ridley P."/>
            <person name="Langham S.-A."/>
            <person name="McCullagh B."/>
            <person name="Bilham L."/>
            <person name="Robben J."/>
            <person name="van der Schueren J."/>
            <person name="Grymonprez B."/>
            <person name="Chuang Y.-J."/>
            <person name="Vandenbussche F."/>
            <person name="Braeken M."/>
            <person name="Weltjens I."/>
            <person name="Voet M."/>
            <person name="Bastiaens I."/>
            <person name="Aert R."/>
            <person name="Defoor E."/>
            <person name="Weitzenegger T."/>
            <person name="Bothe G."/>
            <person name="Ramsperger U."/>
            <person name="Hilbert H."/>
            <person name="Braun M."/>
            <person name="Holzer E."/>
            <person name="Brandt A."/>
            <person name="Peters S."/>
            <person name="van Staveren M."/>
            <person name="Dirkse W."/>
            <person name="Mooijman P."/>
            <person name="Klein Lankhorst R."/>
            <person name="Rose M."/>
            <person name="Hauf J."/>
            <person name="Koetter P."/>
            <person name="Berneiser S."/>
            <person name="Hempel S."/>
            <person name="Feldpausch M."/>
            <person name="Lamberth S."/>
            <person name="Van den Daele H."/>
            <person name="De Keyser A."/>
            <person name="Buysshaert C."/>
            <person name="Gielen J."/>
            <person name="Villarroel R."/>
            <person name="De Clercq R."/>
            <person name="van Montagu M."/>
            <person name="Rogers J."/>
            <person name="Cronin A."/>
            <person name="Quail M.A."/>
            <person name="Bray-Allen S."/>
            <person name="Clark L."/>
            <person name="Doggett J."/>
            <person name="Hall S."/>
            <person name="Kay M."/>
            <person name="Lennard N."/>
            <person name="McLay K."/>
            <person name="Mayes R."/>
            <person name="Pettett A."/>
            <person name="Rajandream M.A."/>
            <person name="Lyne M."/>
            <person name="Benes V."/>
            <person name="Rechmann S."/>
            <person name="Borkova D."/>
            <person name="Bloecker H."/>
            <person name="Scharfe M."/>
            <person name="Grimm M."/>
            <person name="Loehnert T.-H."/>
            <person name="Dose S."/>
            <person name="de Haan M."/>
            <person name="Maarse A.C."/>
            <person name="Schaefer M."/>
            <person name="Mueller-Auer S."/>
            <person name="Gabel C."/>
            <person name="Fuchs M."/>
            <person name="Fartmann B."/>
            <person name="Granderath K."/>
            <person name="Dauner D."/>
            <person name="Herzl A."/>
            <person name="Neumann S."/>
            <person name="Argiriou A."/>
            <person name="Vitale D."/>
            <person name="Liguori R."/>
            <person name="Piravandi E."/>
            <person name="Massenet O."/>
            <person name="Quigley F."/>
            <person name="Clabauld G."/>
            <person name="Muendlein A."/>
            <person name="Felber R."/>
            <person name="Schnabl S."/>
            <person name="Hiller R."/>
            <person name="Schmidt W."/>
            <person name="Lecharny A."/>
            <person name="Aubourg S."/>
            <person name="Chefdor F."/>
            <person name="Cooke R."/>
            <person name="Berger C."/>
            <person name="Monfort A."/>
            <person name="Casacuberta E."/>
            <person name="Gibbons T."/>
            <person name="Weber N."/>
            <person name="Vandenbol M."/>
            <person name="Bargues M."/>
            <person name="Terol J."/>
            <person name="Torres A."/>
            <person name="Perez-Perez A."/>
            <person name="Purnelle B."/>
            <person name="Bent E."/>
            <person name="Johnson S."/>
            <person name="Tacon D."/>
            <person name="Jesse T."/>
            <person name="Heijnen L."/>
            <person name="Schwarz S."/>
            <person name="Scholler P."/>
            <person name="Heber S."/>
            <person name="Francs P."/>
            <person name="Bielke C."/>
            <person name="Frishman D."/>
            <person name="Haase D."/>
            <person name="Lemcke K."/>
            <person name="Mewes H.-W."/>
            <person name="Stocker S."/>
            <person name="Zaccaria P."/>
            <person name="Bevan M."/>
            <person name="Wilson R.K."/>
            <person name="de la Bastide M."/>
            <person name="Habermann K."/>
            <person name="Parnell L."/>
            <person name="Dedhia N."/>
            <person name="Gnoj L."/>
            <person name="Schutz K."/>
            <person name="Huang E."/>
            <person name="Spiegel L."/>
            <person name="Sekhon M."/>
            <person name="Murray J."/>
            <person name="Sheet P."/>
            <person name="Cordes M."/>
            <person name="Abu-Threideh J."/>
            <person name="Stoneking T."/>
            <person name="Kalicki J."/>
            <person name="Graves T."/>
            <person name="Harmon G."/>
            <person name="Edwards J."/>
            <person name="Latreille P."/>
            <person name="Courtney L."/>
            <person name="Cloud J."/>
            <person name="Abbott A."/>
            <person name="Scott K."/>
            <person name="Johnson D."/>
            <person name="Minx P."/>
            <person name="Bentley D."/>
            <person name="Fulton B."/>
            <person name="Miller N."/>
            <person name="Greco T."/>
            <person name="Kemp K."/>
            <person name="Kramer J."/>
            <person name="Fulton L."/>
            <person name="Mardis E."/>
            <person name="Dante M."/>
            <person name="Pepin K."/>
            <person name="Hillier L.W."/>
            <person name="Nelson J."/>
            <person name="Spieth J."/>
            <person name="Ryan E."/>
            <person name="Andrews S."/>
            <person name="Geisel C."/>
            <person name="Layman D."/>
            <person name="Du H."/>
            <person name="Ali J."/>
            <person name="Berghoff A."/>
            <person name="Jones K."/>
            <person name="Drone K."/>
            <person name="Cotton M."/>
            <person name="Joshu C."/>
            <person name="Antonoiu B."/>
            <person name="Zidanic M."/>
            <person name="Strong C."/>
            <person name="Sun H."/>
            <person name="Lamar B."/>
            <person name="Yordan C."/>
            <person name="Ma P."/>
            <person name="Zhong J."/>
            <person name="Preston R."/>
            <person name="Vil D."/>
            <person name="Shekher M."/>
            <person name="Matero A."/>
            <person name="Shah R."/>
            <person name="Swaby I.K."/>
            <person name="O'Shaughnessy A."/>
            <person name="Rodriguez M."/>
            <person name="Hoffman J."/>
            <person name="Till S."/>
            <person name="Granat S."/>
            <person name="Shohdy N."/>
            <person name="Hasegawa A."/>
            <person name="Hameed A."/>
            <person name="Lodhi M."/>
            <person name="Johnson A."/>
            <person name="Chen E."/>
            <person name="Marra M.A."/>
            <person name="Martienssen R."/>
            <person name="McCombie W.R."/>
        </authorList>
    </citation>
    <scope>NUCLEOTIDE SEQUENCE [LARGE SCALE GENOMIC DNA]</scope>
    <source>
        <strain>cv. Columbia</strain>
    </source>
</reference>
<reference key="2">
    <citation type="journal article" date="2017" name="Plant J.">
        <title>Araport11: a complete reannotation of the Arabidopsis thaliana reference genome.</title>
        <authorList>
            <person name="Cheng C.Y."/>
            <person name="Krishnakumar V."/>
            <person name="Chan A.P."/>
            <person name="Thibaud-Nissen F."/>
            <person name="Schobel S."/>
            <person name="Town C.D."/>
        </authorList>
    </citation>
    <scope>GENOME REANNOTATION</scope>
    <source>
        <strain>cv. Columbia</strain>
    </source>
</reference>
<reference key="3">
    <citation type="journal article" date="2003" name="Science">
        <title>Empirical analysis of transcriptional activity in the Arabidopsis genome.</title>
        <authorList>
            <person name="Yamada K."/>
            <person name="Lim J."/>
            <person name="Dale J.M."/>
            <person name="Chen H."/>
            <person name="Shinn P."/>
            <person name="Palm C.J."/>
            <person name="Southwick A.M."/>
            <person name="Wu H.C."/>
            <person name="Kim C.J."/>
            <person name="Nguyen M."/>
            <person name="Pham P.K."/>
            <person name="Cheuk R.F."/>
            <person name="Karlin-Newmann G."/>
            <person name="Liu S.X."/>
            <person name="Lam B."/>
            <person name="Sakano H."/>
            <person name="Wu T."/>
            <person name="Yu G."/>
            <person name="Miranda M."/>
            <person name="Quach H.L."/>
            <person name="Tripp M."/>
            <person name="Chang C.H."/>
            <person name="Lee J.M."/>
            <person name="Toriumi M.J."/>
            <person name="Chan M.M."/>
            <person name="Tang C.C."/>
            <person name="Onodera C.S."/>
            <person name="Deng J.M."/>
            <person name="Akiyama K."/>
            <person name="Ansari Y."/>
            <person name="Arakawa T."/>
            <person name="Banh J."/>
            <person name="Banno F."/>
            <person name="Bowser L."/>
            <person name="Brooks S.Y."/>
            <person name="Carninci P."/>
            <person name="Chao Q."/>
            <person name="Choy N."/>
            <person name="Enju A."/>
            <person name="Goldsmith A.D."/>
            <person name="Gurjal M."/>
            <person name="Hansen N.F."/>
            <person name="Hayashizaki Y."/>
            <person name="Johnson-Hopson C."/>
            <person name="Hsuan V.W."/>
            <person name="Iida K."/>
            <person name="Karnes M."/>
            <person name="Khan S."/>
            <person name="Koesema E."/>
            <person name="Ishida J."/>
            <person name="Jiang P.X."/>
            <person name="Jones T."/>
            <person name="Kawai J."/>
            <person name="Kamiya A."/>
            <person name="Meyers C."/>
            <person name="Nakajima M."/>
            <person name="Narusaka M."/>
            <person name="Seki M."/>
            <person name="Sakurai T."/>
            <person name="Satou M."/>
            <person name="Tamse R."/>
            <person name="Vaysberg M."/>
            <person name="Wallender E.K."/>
            <person name="Wong C."/>
            <person name="Yamamura Y."/>
            <person name="Yuan S."/>
            <person name="Shinozaki K."/>
            <person name="Davis R.W."/>
            <person name="Theologis A."/>
            <person name="Ecker J.R."/>
        </authorList>
    </citation>
    <scope>NUCLEOTIDE SEQUENCE [LARGE SCALE MRNA]</scope>
    <source>
        <strain>cv. Columbia</strain>
    </source>
</reference>
<reference key="4">
    <citation type="submission" date="2009-03" db="EMBL/GenBank/DDBJ databases">
        <title>ORF cloning and analysis of Arabidopsis transcription factor genes.</title>
        <authorList>
            <person name="Fujita M."/>
            <person name="Mizukado S."/>
            <person name="Seki M."/>
            <person name="Shinozaki K."/>
            <person name="Mitsuda N."/>
            <person name="Takiguchi Y."/>
            <person name="Takagi M."/>
        </authorList>
    </citation>
    <scope>NUCLEOTIDE SEQUENCE [LARGE SCALE MRNA]</scope>
</reference>
<reference key="5">
    <citation type="journal article" date="2003" name="Plant J.">
        <title>GeBP, the first member of a new gene family in Arabidopsis, encodes a nuclear protein with DNA-binding activity and is regulated by KNAT1.</title>
        <authorList>
            <person name="Curaba J."/>
            <person name="Herzog M."/>
            <person name="Vachon G."/>
        </authorList>
    </citation>
    <scope>GENE FAMILY</scope>
</reference>
<reference key="6">
    <citation type="journal article" date="2007" name="Mol. Cell">
        <title>Purification of a plant mediator from Arabidopsis thaliana identifies PFT1 as the Med25 subunit.</title>
        <authorList>
            <person name="Baeckstroem S."/>
            <person name="Elfving N."/>
            <person name="Nilsson R."/>
            <person name="Wingsle G."/>
            <person name="Bjoerklund S."/>
        </authorList>
    </citation>
    <scope>IDENTIFICATION BY MASS SPECTROMETRY</scope>
    <scope>SUBUNIT</scope>
    <scope>INTERACTION WITH MED6</scope>
</reference>
<reference key="7">
    <citation type="journal article" date="2014" name="Plant Cell">
        <title>A DEK domain-containing protein modulates chromatin structure and function in Arabidopsis.</title>
        <authorList>
            <person name="Waidmann S."/>
            <person name="Kusenda B."/>
            <person name="Mayerhofer J."/>
            <person name="Mechtler K."/>
            <person name="Jonak C."/>
        </authorList>
    </citation>
    <scope>INTERACTION WITH DEK3</scope>
    <scope>IDENTIFICATION BY MASS SPECTROMETRY</scope>
    <source>
        <strain>cv. Columbia</strain>
    </source>
</reference>
<reference key="8">
    <citation type="journal article" date="2015" name="Biochem. J.">
        <title>Biochemical and redox characterization of the mediator complex and its associated transcription factor GeBPL, a GLABROUS1 enhancer binding protein.</title>
        <authorList>
            <person name="Shaikhali J."/>
            <person name="Davoine C."/>
            <person name="Braennstroem K."/>
            <person name="Rouhier N."/>
            <person name="Bygdell J."/>
            <person name="Bjoerklund S."/>
            <person name="Wingsle G."/>
        </authorList>
    </citation>
    <scope>FUNCTION</scope>
    <scope>SUBUNIT</scope>
    <scope>INTERACTION WITH MED10A; MED28 AND MED32</scope>
    <scope>MUTAGENESIS OF CYS-175; CYS-310 AND CYS-348</scope>
</reference>
<reference key="9">
    <citation type="journal article" date="2016" name="Plant Physiol. Biochem.">
        <title>Regulation of Arabidopsis thaliana plasma membrane glucose-responsive regulator (AtPGR) expression by A. thaliana storekeeper-like transcription factor, AtSTKL, modulates glucose response in Arabidopsis.</title>
        <authorList>
            <person name="Chung M.S."/>
            <person name="Lee S."/>
            <person name="Min J.H."/>
            <person name="Huang P."/>
            <person name="Ju H.W."/>
            <person name="Kim C.S."/>
        </authorList>
    </citation>
    <scope>GENE FAMILY</scope>
</reference>
<protein>
    <recommendedName>
        <fullName evidence="6">GLABROUS1 enhancer-binding protein-like</fullName>
    </recommendedName>
    <alternativeName>
        <fullName evidence="5">Mediator-associated protein 1</fullName>
    </alternativeName>
    <alternativeName>
        <fullName evidence="6">Protein GeBPL</fullName>
    </alternativeName>
    <alternativeName>
        <fullName evidence="7">Storekeeper-like protein At4g25210</fullName>
    </alternativeName>
    <alternativeName>
        <fullName evidence="7">Transcription factor At4g25210</fullName>
    </alternativeName>
</protein>
<organism>
    <name type="scientific">Arabidopsis thaliana</name>
    <name type="common">Mouse-ear cress</name>
    <dbReference type="NCBI Taxonomy" id="3702"/>
    <lineage>
        <taxon>Eukaryota</taxon>
        <taxon>Viridiplantae</taxon>
        <taxon>Streptophyta</taxon>
        <taxon>Embryophyta</taxon>
        <taxon>Tracheophyta</taxon>
        <taxon>Spermatophyta</taxon>
        <taxon>Magnoliopsida</taxon>
        <taxon>eudicotyledons</taxon>
        <taxon>Gunneridae</taxon>
        <taxon>Pentapetalae</taxon>
        <taxon>rosids</taxon>
        <taxon>malvids</taxon>
        <taxon>Brassicales</taxon>
        <taxon>Brassicaceae</taxon>
        <taxon>Camelineae</taxon>
        <taxon>Arabidopsis</taxon>
    </lineage>
</organism>
<evidence type="ECO:0000256" key="1">
    <source>
        <dbReference type="SAM" id="MobiDB-lite"/>
    </source>
</evidence>
<evidence type="ECO:0000269" key="2">
    <source>
    </source>
</evidence>
<evidence type="ECO:0000269" key="3">
    <source>
    </source>
</evidence>
<evidence type="ECO:0000269" key="4">
    <source>
    </source>
</evidence>
<evidence type="ECO:0000303" key="5">
    <source>
    </source>
</evidence>
<evidence type="ECO:0000303" key="6">
    <source>
    </source>
</evidence>
<evidence type="ECO:0000305" key="7"/>
<evidence type="ECO:0000312" key="8">
    <source>
        <dbReference type="Araport" id="AT4G25210"/>
    </source>
</evidence>
<evidence type="ECO:0000312" key="9">
    <source>
        <dbReference type="EMBL" id="CAA23062.1"/>
    </source>
</evidence>
<feature type="chain" id="PRO_0000419196" description="GLABROUS1 enhancer-binding protein-like">
    <location>
        <begin position="1"/>
        <end position="368"/>
    </location>
</feature>
<feature type="region of interest" description="Disordered" evidence="1">
    <location>
        <begin position="1"/>
        <end position="123"/>
    </location>
</feature>
<feature type="compositionally biased region" description="Acidic residues" evidence="1">
    <location>
        <begin position="17"/>
        <end position="31"/>
    </location>
</feature>
<feature type="compositionally biased region" description="Basic and acidic residues" evidence="1">
    <location>
        <begin position="35"/>
        <end position="47"/>
    </location>
</feature>
<feature type="compositionally biased region" description="Polar residues" evidence="1">
    <location>
        <begin position="84"/>
        <end position="97"/>
    </location>
</feature>
<feature type="compositionally biased region" description="Basic and acidic residues" evidence="1">
    <location>
        <begin position="100"/>
        <end position="123"/>
    </location>
</feature>
<feature type="mutagenesis site" description="Decreased DNA binding; when associated with S-310 or S-348. Loss of DNA binding; when associated with S-348 or S-310 and S-348." evidence="4">
    <original>C</original>
    <variation>S</variation>
    <location>
        <position position="175"/>
    </location>
</feature>
<feature type="mutagenesis site" description="Decreased DNA binding; when associated with S-175. Loss of DNA binding; when associated with S-348 or S-175 and S-348." evidence="4">
    <original>C</original>
    <variation>S</variation>
    <location>
        <position position="310"/>
    </location>
</feature>
<feature type="mutagenesis site" description="Decreased DNA binding; when associated with S-175. Loss of DNA binding; when associated with S-310 or S-175 and S-310." evidence="4">
    <original>C</original>
    <variation>S</variation>
    <location>
        <position position="348"/>
    </location>
</feature>
<feature type="sequence conflict" description="In Ref. 3; AAK62441." evidence="7" ref="3">
    <original>F</original>
    <variation>S</variation>
    <location>
        <position position="221"/>
    </location>
</feature>
<keyword id="KW-0539">Nucleus</keyword>
<keyword id="KW-1185">Reference proteome</keyword>
<sequence>MAPKKAEEVVESPPVSSEEEESGSSGEESESSAEVPKKVESSQKPESDSEGESESESSSGPEPESEPAKTIKLKPVGTKPIPETSGSAATVPESSTAKRPLKEAAPEAIKKQKTSDTEHVKKPITNDEVKKISSEDAKKMFQRLFSETDEIALLQGIIDFTSTKGDPYEDIDAFCIYVKKLIDFDATKNQIVTKLQRLKKKFNNAVKNSLKKGKTEDDIEFAKDLEQKGFELSRKIWGSNGVLVTGKSSRKKVGGTPAPKEMKLVAHSTPKKQQEEAKKPERTEAKVVNTGLSIGKEIASFLNADNGSSCGLDESTLTAVWAKVADGAEKREVEEKWKKLKAKQFELCLQRSGLVNETAKMIFKAYES</sequence>
<gene>
    <name evidence="6" type="primary">GEBPL</name>
    <name evidence="8" type="ordered locus">At4g25210</name>
    <name evidence="9" type="ORF">F24A6.50</name>
</gene>
<proteinExistence type="evidence at protein level"/>
<accession>Q9SB42</accession>
<accession>Q8H0X7</accession>
<accession>Q94F05</accession>
<dbReference type="EMBL" id="AL035396">
    <property type="protein sequence ID" value="CAA23062.1"/>
    <property type="molecule type" value="Genomic_DNA"/>
</dbReference>
<dbReference type="EMBL" id="AL161562">
    <property type="protein sequence ID" value="CAB79430.1"/>
    <property type="molecule type" value="Genomic_DNA"/>
</dbReference>
<dbReference type="EMBL" id="CP002687">
    <property type="protein sequence ID" value="AEE85025.1"/>
    <property type="molecule type" value="Genomic_DNA"/>
</dbReference>
<dbReference type="EMBL" id="AF325095">
    <property type="protein sequence ID" value="AAK17163.1"/>
    <property type="molecule type" value="mRNA"/>
</dbReference>
<dbReference type="EMBL" id="AF386996">
    <property type="protein sequence ID" value="AAK62441.1"/>
    <property type="status" value="ALT_INIT"/>
    <property type="molecule type" value="mRNA"/>
</dbReference>
<dbReference type="EMBL" id="BT001181">
    <property type="protein sequence ID" value="AAN65068.1"/>
    <property type="molecule type" value="mRNA"/>
</dbReference>
<dbReference type="EMBL" id="AB493698">
    <property type="protein sequence ID" value="BAH30536.1"/>
    <property type="molecule type" value="mRNA"/>
</dbReference>
<dbReference type="PIR" id="T05542">
    <property type="entry name" value="T05542"/>
</dbReference>
<dbReference type="RefSeq" id="NP_194251.1">
    <property type="nucleotide sequence ID" value="NM_118653.4"/>
</dbReference>
<dbReference type="SMR" id="Q9SB42"/>
<dbReference type="BioGRID" id="13911">
    <property type="interactions" value="4"/>
</dbReference>
<dbReference type="FunCoup" id="Q9SB42">
    <property type="interactions" value="921"/>
</dbReference>
<dbReference type="IntAct" id="Q9SB42">
    <property type="interactions" value="4"/>
</dbReference>
<dbReference type="STRING" id="3702.Q9SB42"/>
<dbReference type="GlyGen" id="Q9SB42">
    <property type="glycosylation" value="1 site"/>
</dbReference>
<dbReference type="iPTMnet" id="Q9SB42"/>
<dbReference type="PaxDb" id="3702-AT4G25210.1"/>
<dbReference type="ProteomicsDB" id="228353"/>
<dbReference type="EnsemblPlants" id="AT4G25210.1">
    <property type="protein sequence ID" value="AT4G25210.1"/>
    <property type="gene ID" value="AT4G25210"/>
</dbReference>
<dbReference type="GeneID" id="828624"/>
<dbReference type="Gramene" id="AT4G25210.1">
    <property type="protein sequence ID" value="AT4G25210.1"/>
    <property type="gene ID" value="AT4G25210"/>
</dbReference>
<dbReference type="KEGG" id="ath:AT4G25210"/>
<dbReference type="Araport" id="AT4G25210"/>
<dbReference type="TAIR" id="AT4G25210"/>
<dbReference type="eggNOG" id="ENOG502RQE9">
    <property type="taxonomic scope" value="Eukaryota"/>
</dbReference>
<dbReference type="HOGENOM" id="CLU_856181_0_0_1"/>
<dbReference type="InParanoid" id="Q9SB42"/>
<dbReference type="OMA" id="PIAMANG"/>
<dbReference type="OrthoDB" id="661680at2759"/>
<dbReference type="PhylomeDB" id="Q9SB42"/>
<dbReference type="CD-CODE" id="4299E36E">
    <property type="entry name" value="Nucleolus"/>
</dbReference>
<dbReference type="PRO" id="PR:Q9SB42"/>
<dbReference type="Proteomes" id="UP000006548">
    <property type="component" value="Chromosome 4"/>
</dbReference>
<dbReference type="ExpressionAtlas" id="Q9SB42">
    <property type="expression patterns" value="baseline and differential"/>
</dbReference>
<dbReference type="GO" id="GO:0016592">
    <property type="term" value="C:mediator complex"/>
    <property type="evidence" value="ECO:0000314"/>
    <property type="project" value="UniProtKB"/>
</dbReference>
<dbReference type="GO" id="GO:0005730">
    <property type="term" value="C:nucleolus"/>
    <property type="evidence" value="ECO:0007005"/>
    <property type="project" value="TAIR"/>
</dbReference>
<dbReference type="GO" id="GO:0000976">
    <property type="term" value="F:transcription cis-regulatory region binding"/>
    <property type="evidence" value="ECO:0000353"/>
    <property type="project" value="TAIR"/>
</dbReference>
<dbReference type="GO" id="GO:0006355">
    <property type="term" value="P:regulation of DNA-templated transcription"/>
    <property type="evidence" value="ECO:0000304"/>
    <property type="project" value="TAIR"/>
</dbReference>
<dbReference type="InterPro" id="IPR007592">
    <property type="entry name" value="GEBP"/>
</dbReference>
<dbReference type="InterPro" id="IPR053933">
    <property type="entry name" value="GeBP-like_C"/>
</dbReference>
<dbReference type="InterPro" id="IPR053932">
    <property type="entry name" value="GeBP-like_DBD"/>
</dbReference>
<dbReference type="PANTHER" id="PTHR31662">
    <property type="entry name" value="BNAANNG10740D PROTEIN-RELATED"/>
    <property type="match status" value="1"/>
</dbReference>
<dbReference type="PANTHER" id="PTHR31662:SF51">
    <property type="entry name" value="GLABROUS1 ENHANCER-BINDING PROTEIN-LIKE"/>
    <property type="match status" value="1"/>
</dbReference>
<dbReference type="Pfam" id="PF22757">
    <property type="entry name" value="GeBP-like_C"/>
    <property type="match status" value="1"/>
</dbReference>
<dbReference type="Pfam" id="PF04504">
    <property type="entry name" value="GeBP-like_DBD"/>
    <property type="match status" value="1"/>
</dbReference>
<comment type="function">
    <text evidence="4">Transcription factor that binds promoters containing the CryR2 element, 5'-ACATAWCT-3' (PubMed:25877331). The DNA-binding activity is decreased upon direct physical interaction with the mediator subunits and is modulated by redox conditions (PubMed:25877331). The oxidized protein is the preferential binding form (PubMed:25877331).</text>
</comment>
<comment type="subunit">
    <text evidence="2 3 4">Mono-, di- and oligomers (PubMed:25877331). Associated with the Mediator complex (PubMed:17560376). Interacts with MED6 (PubMed:17560376). Interacts with MED10A, MED28 and MED32 (PubMed:25877331). Interacts with DEK3 (PubMed:25387881).</text>
</comment>
<comment type="subcellular location">
    <subcellularLocation>
        <location evidence="7">Nucleus</location>
    </subcellularLocation>
</comment>
<comment type="similarity">
    <text evidence="7">Belongs to the GeBP family.</text>
</comment>
<comment type="sequence caution" evidence="7">
    <conflict type="erroneous initiation">
        <sequence resource="EMBL-CDS" id="AAK62441"/>
    </conflict>
    <text>Truncated N-terminus.</text>
</comment>
<comment type="online information" name="Plant Transcription Factor Database">
    <link uri="https://planttfdb.gao-lab.org/family.php?fam=GeBP#family_intro"/>
</comment>
<name>STKLS_ARATH</name>